<sequence>MSTGQEARRDEGDSRKEQEASLRDRAHLSQQRQLKQATQFLHKDSADLLPLDSLKRLGTSKDLQPHSVIQRRLVEGNQRRLQGESPLLQALIRGHDSSRTSATQVPALLVNCKCQDQMLRVAVDTGTQHNQISAGCLRRLGLGKRVPKAPGGDVAPEPPTQVEQLELELGQETVACSAQVVDVDSPEFCLGLQTLLSLKLATSLSASSLLPSALGIPTESICDSEALVPHSLLSLPKCTTKSLTEKDLQQMGSRLHPGCRGQSYLLPPLA</sequence>
<dbReference type="EMBL" id="AJ278170">
    <property type="protein sequence ID" value="CAB95737.1"/>
    <property type="molecule type" value="mRNA"/>
</dbReference>
<dbReference type="EMBL" id="AK134689">
    <property type="protein sequence ID" value="BAE22242.1"/>
    <property type="status" value="ALT_FRAME"/>
    <property type="molecule type" value="mRNA"/>
</dbReference>
<dbReference type="EMBL" id="AK156526">
    <property type="protein sequence ID" value="BAE33744.1"/>
    <property type="molecule type" value="mRNA"/>
</dbReference>
<dbReference type="EMBL" id="BC115523">
    <property type="protein sequence ID" value="AAI15524.1"/>
    <property type="molecule type" value="mRNA"/>
</dbReference>
<dbReference type="CCDS" id="CCDS20571.1">
    <molecule id="Q9JHR9-2"/>
</dbReference>
<dbReference type="CCDS" id="CCDS51917.1">
    <molecule id="Q9JHR9-1"/>
</dbReference>
<dbReference type="RefSeq" id="NP_001156330.1">
    <molecule id="Q9JHR9-1"/>
    <property type="nucleotide sequence ID" value="NM_001162858.2"/>
</dbReference>
<dbReference type="RefSeq" id="NP_001398308.1">
    <molecule id="Q9JHR9-2"/>
    <property type="nucleotide sequence ID" value="NM_001411379.1"/>
</dbReference>
<dbReference type="RefSeq" id="NP_068363.2">
    <molecule id="Q9JHR9-2"/>
    <property type="nucleotide sequence ID" value="NM_021717.3"/>
</dbReference>
<dbReference type="SMR" id="Q9JHR9"/>
<dbReference type="BioGRID" id="208553">
    <property type="interactions" value="4"/>
</dbReference>
<dbReference type="FunCoup" id="Q9JHR9">
    <property type="interactions" value="1021"/>
</dbReference>
<dbReference type="IntAct" id="Q9JHR9">
    <property type="interactions" value="1"/>
</dbReference>
<dbReference type="STRING" id="10090.ENSMUSP00000113317"/>
<dbReference type="MEROPS" id="A28.002"/>
<dbReference type="iPTMnet" id="Q9JHR9"/>
<dbReference type="PhosphoSitePlus" id="Q9JHR9"/>
<dbReference type="PaxDb" id="10090-ENSMUSP00000113317"/>
<dbReference type="ProteomicsDB" id="252856">
    <molecule id="Q9JHR9-1"/>
</dbReference>
<dbReference type="ProteomicsDB" id="252857">
    <molecule id="Q9JHR9-2"/>
</dbReference>
<dbReference type="DNASU" id="60345"/>
<dbReference type="Ensembl" id="ENSMUST00000001561.12">
    <molecule id="Q9JHR9-2"/>
    <property type="protein sequence ID" value="ENSMUSP00000001561.6"/>
    <property type="gene ID" value="ENSMUSG00000001520.13"/>
</dbReference>
<dbReference type="Ensembl" id="ENSMUST00000120405.4">
    <molecule id="Q9JHR9-1"/>
    <property type="protein sequence ID" value="ENSMUSP00000113317.2"/>
    <property type="gene ID" value="ENSMUSG00000001520.13"/>
</dbReference>
<dbReference type="GeneID" id="60345"/>
<dbReference type="KEGG" id="mmu:60345"/>
<dbReference type="UCSC" id="uc009edn.2">
    <molecule id="Q9JHR9-2"/>
    <property type="organism name" value="mouse"/>
</dbReference>
<dbReference type="UCSC" id="uc012etb.1">
    <molecule id="Q9JHR9-1"/>
    <property type="organism name" value="mouse"/>
</dbReference>
<dbReference type="AGR" id="MGI:1891884"/>
<dbReference type="CTD" id="83714"/>
<dbReference type="MGI" id="MGI:1891884">
    <property type="gene designation" value="Nrip2"/>
</dbReference>
<dbReference type="VEuPathDB" id="HostDB:ENSMUSG00000001520"/>
<dbReference type="eggNOG" id="KOG0012">
    <property type="taxonomic scope" value="Eukaryota"/>
</dbReference>
<dbReference type="GeneTree" id="ENSGT00950000182999"/>
<dbReference type="HOGENOM" id="CLU_087166_0_0_1"/>
<dbReference type="InParanoid" id="Q9JHR9"/>
<dbReference type="OMA" id="PSCWKES"/>
<dbReference type="OrthoDB" id="1047367at2759"/>
<dbReference type="PhylomeDB" id="Q9JHR9"/>
<dbReference type="TreeFam" id="TF333421"/>
<dbReference type="BioGRID-ORCS" id="60345">
    <property type="hits" value="1 hit in 78 CRISPR screens"/>
</dbReference>
<dbReference type="PRO" id="PR:Q9JHR9"/>
<dbReference type="Proteomes" id="UP000000589">
    <property type="component" value="Chromosome 6"/>
</dbReference>
<dbReference type="RNAct" id="Q9JHR9">
    <property type="molecule type" value="protein"/>
</dbReference>
<dbReference type="Bgee" id="ENSMUSG00000001520">
    <property type="expression patterns" value="Expressed in hypothalamus and 76 other cell types or tissues"/>
</dbReference>
<dbReference type="ExpressionAtlas" id="Q9JHR9">
    <property type="expression patterns" value="baseline and differential"/>
</dbReference>
<dbReference type="GO" id="GO:0005737">
    <property type="term" value="C:cytoplasm"/>
    <property type="evidence" value="ECO:0007669"/>
    <property type="project" value="Ensembl"/>
</dbReference>
<dbReference type="GO" id="GO:0005634">
    <property type="term" value="C:nucleus"/>
    <property type="evidence" value="ECO:0000314"/>
    <property type="project" value="MGI"/>
</dbReference>
<dbReference type="GO" id="GO:0004190">
    <property type="term" value="F:aspartic-type endopeptidase activity"/>
    <property type="evidence" value="ECO:0007669"/>
    <property type="project" value="InterPro"/>
</dbReference>
<dbReference type="GO" id="GO:0000122">
    <property type="term" value="P:negative regulation of transcription by RNA polymerase II"/>
    <property type="evidence" value="ECO:0000314"/>
    <property type="project" value="MGI"/>
</dbReference>
<dbReference type="GO" id="GO:0007219">
    <property type="term" value="P:Notch signaling pathway"/>
    <property type="evidence" value="ECO:0000314"/>
    <property type="project" value="MGI"/>
</dbReference>
<dbReference type="GO" id="GO:0006508">
    <property type="term" value="P:proteolysis"/>
    <property type="evidence" value="ECO:0007669"/>
    <property type="project" value="InterPro"/>
</dbReference>
<dbReference type="Gene3D" id="2.40.70.10">
    <property type="entry name" value="Acid Proteases"/>
    <property type="match status" value="1"/>
</dbReference>
<dbReference type="InterPro" id="IPR021109">
    <property type="entry name" value="Peptidase_aspartic_dom_sf"/>
</dbReference>
<dbReference type="PANTHER" id="PTHR12917">
    <property type="entry name" value="ASPARTYL PROTEASE DDI-RELATED"/>
    <property type="match status" value="1"/>
</dbReference>
<dbReference type="PANTHER" id="PTHR12917:SF17">
    <property type="entry name" value="NUCLEAR RECEPTOR-INTERACTING PROTEIN 2"/>
    <property type="match status" value="1"/>
</dbReference>
<dbReference type="SUPFAM" id="SSF50630">
    <property type="entry name" value="Acid proteases"/>
    <property type="match status" value="1"/>
</dbReference>
<organism>
    <name type="scientific">Mus musculus</name>
    <name type="common">Mouse</name>
    <dbReference type="NCBI Taxonomy" id="10090"/>
    <lineage>
        <taxon>Eukaryota</taxon>
        <taxon>Metazoa</taxon>
        <taxon>Chordata</taxon>
        <taxon>Craniata</taxon>
        <taxon>Vertebrata</taxon>
        <taxon>Euteleostomi</taxon>
        <taxon>Mammalia</taxon>
        <taxon>Eutheria</taxon>
        <taxon>Euarchontoglires</taxon>
        <taxon>Glires</taxon>
        <taxon>Rodentia</taxon>
        <taxon>Myomorpha</taxon>
        <taxon>Muroidea</taxon>
        <taxon>Muridae</taxon>
        <taxon>Murinae</taxon>
        <taxon>Mus</taxon>
        <taxon>Mus</taxon>
    </lineage>
</organism>
<evidence type="ECO:0000256" key="1">
    <source>
        <dbReference type="SAM" id="MobiDB-lite"/>
    </source>
</evidence>
<evidence type="ECO:0000269" key="2">
    <source>
    </source>
</evidence>
<evidence type="ECO:0000303" key="3">
    <source>
    </source>
</evidence>
<evidence type="ECO:0000303" key="4">
    <source>
    </source>
</evidence>
<evidence type="ECO:0000303" key="5">
    <source>
    </source>
</evidence>
<evidence type="ECO:0000305" key="6"/>
<keyword id="KW-0025">Alternative splicing</keyword>
<keyword id="KW-0539">Nucleus</keyword>
<keyword id="KW-1185">Reference proteome</keyword>
<keyword id="KW-0804">Transcription</keyword>
<keyword id="KW-0805">Transcription regulation</keyword>
<reference key="1">
    <citation type="journal article" date="2000" name="Proc. Natl. Acad. Sci. U.S.A.">
        <title>Differential ligand-dependent protein-protein interactions between nuclear receptors and a neuronal-specific cofactor.</title>
        <authorList>
            <person name="Greiner E.F."/>
            <person name="Kirfel J."/>
            <person name="Greschik H."/>
            <person name="Huang D."/>
            <person name="Becker P."/>
            <person name="Kapfhammer J.P."/>
            <person name="Schuele R."/>
        </authorList>
    </citation>
    <scope>NUCLEOTIDE SEQUENCE [MRNA] (ISOFORM 2)</scope>
    <scope>FUNCTION</scope>
    <scope>SUBCELLULAR LOCATION</scope>
    <scope>INTERACTION WITH NR1F2; RARA AND THRB</scope>
    <scope>TISSUE SPECIFICITY</scope>
    <source>
        <tissue>Brain</tissue>
    </source>
</reference>
<reference key="2">
    <citation type="journal article" date="2005" name="Science">
        <title>The transcriptional landscape of the mammalian genome.</title>
        <authorList>
            <person name="Carninci P."/>
            <person name="Kasukawa T."/>
            <person name="Katayama S."/>
            <person name="Gough J."/>
            <person name="Frith M.C."/>
            <person name="Maeda N."/>
            <person name="Oyama R."/>
            <person name="Ravasi T."/>
            <person name="Lenhard B."/>
            <person name="Wells C."/>
            <person name="Kodzius R."/>
            <person name="Shimokawa K."/>
            <person name="Bajic V.B."/>
            <person name="Brenner S.E."/>
            <person name="Batalov S."/>
            <person name="Forrest A.R."/>
            <person name="Zavolan M."/>
            <person name="Davis M.J."/>
            <person name="Wilming L.G."/>
            <person name="Aidinis V."/>
            <person name="Allen J.E."/>
            <person name="Ambesi-Impiombato A."/>
            <person name="Apweiler R."/>
            <person name="Aturaliya R.N."/>
            <person name="Bailey T.L."/>
            <person name="Bansal M."/>
            <person name="Baxter L."/>
            <person name="Beisel K.W."/>
            <person name="Bersano T."/>
            <person name="Bono H."/>
            <person name="Chalk A.M."/>
            <person name="Chiu K.P."/>
            <person name="Choudhary V."/>
            <person name="Christoffels A."/>
            <person name="Clutterbuck D.R."/>
            <person name="Crowe M.L."/>
            <person name="Dalla E."/>
            <person name="Dalrymple B.P."/>
            <person name="de Bono B."/>
            <person name="Della Gatta G."/>
            <person name="di Bernardo D."/>
            <person name="Down T."/>
            <person name="Engstrom P."/>
            <person name="Fagiolini M."/>
            <person name="Faulkner G."/>
            <person name="Fletcher C.F."/>
            <person name="Fukushima T."/>
            <person name="Furuno M."/>
            <person name="Futaki S."/>
            <person name="Gariboldi M."/>
            <person name="Georgii-Hemming P."/>
            <person name="Gingeras T.R."/>
            <person name="Gojobori T."/>
            <person name="Green R.E."/>
            <person name="Gustincich S."/>
            <person name="Harbers M."/>
            <person name="Hayashi Y."/>
            <person name="Hensch T.K."/>
            <person name="Hirokawa N."/>
            <person name="Hill D."/>
            <person name="Huminiecki L."/>
            <person name="Iacono M."/>
            <person name="Ikeo K."/>
            <person name="Iwama A."/>
            <person name="Ishikawa T."/>
            <person name="Jakt M."/>
            <person name="Kanapin A."/>
            <person name="Katoh M."/>
            <person name="Kawasawa Y."/>
            <person name="Kelso J."/>
            <person name="Kitamura H."/>
            <person name="Kitano H."/>
            <person name="Kollias G."/>
            <person name="Krishnan S.P."/>
            <person name="Kruger A."/>
            <person name="Kummerfeld S.K."/>
            <person name="Kurochkin I.V."/>
            <person name="Lareau L.F."/>
            <person name="Lazarevic D."/>
            <person name="Lipovich L."/>
            <person name="Liu J."/>
            <person name="Liuni S."/>
            <person name="McWilliam S."/>
            <person name="Madan Babu M."/>
            <person name="Madera M."/>
            <person name="Marchionni L."/>
            <person name="Matsuda H."/>
            <person name="Matsuzawa S."/>
            <person name="Miki H."/>
            <person name="Mignone F."/>
            <person name="Miyake S."/>
            <person name="Morris K."/>
            <person name="Mottagui-Tabar S."/>
            <person name="Mulder N."/>
            <person name="Nakano N."/>
            <person name="Nakauchi H."/>
            <person name="Ng P."/>
            <person name="Nilsson R."/>
            <person name="Nishiguchi S."/>
            <person name="Nishikawa S."/>
            <person name="Nori F."/>
            <person name="Ohara O."/>
            <person name="Okazaki Y."/>
            <person name="Orlando V."/>
            <person name="Pang K.C."/>
            <person name="Pavan W.J."/>
            <person name="Pavesi G."/>
            <person name="Pesole G."/>
            <person name="Petrovsky N."/>
            <person name="Piazza S."/>
            <person name="Reed J."/>
            <person name="Reid J.F."/>
            <person name="Ring B.Z."/>
            <person name="Ringwald M."/>
            <person name="Rost B."/>
            <person name="Ruan Y."/>
            <person name="Salzberg S.L."/>
            <person name="Sandelin A."/>
            <person name="Schneider C."/>
            <person name="Schoenbach C."/>
            <person name="Sekiguchi K."/>
            <person name="Semple C.A."/>
            <person name="Seno S."/>
            <person name="Sessa L."/>
            <person name="Sheng Y."/>
            <person name="Shibata Y."/>
            <person name="Shimada H."/>
            <person name="Shimada K."/>
            <person name="Silva D."/>
            <person name="Sinclair B."/>
            <person name="Sperling S."/>
            <person name="Stupka E."/>
            <person name="Sugiura K."/>
            <person name="Sultana R."/>
            <person name="Takenaka Y."/>
            <person name="Taki K."/>
            <person name="Tammoja K."/>
            <person name="Tan S.L."/>
            <person name="Tang S."/>
            <person name="Taylor M.S."/>
            <person name="Tegner J."/>
            <person name="Teichmann S.A."/>
            <person name="Ueda H.R."/>
            <person name="van Nimwegen E."/>
            <person name="Verardo R."/>
            <person name="Wei C.L."/>
            <person name="Yagi K."/>
            <person name="Yamanishi H."/>
            <person name="Zabarovsky E."/>
            <person name="Zhu S."/>
            <person name="Zimmer A."/>
            <person name="Hide W."/>
            <person name="Bult C."/>
            <person name="Grimmond S.M."/>
            <person name="Teasdale R.D."/>
            <person name="Liu E.T."/>
            <person name="Brusic V."/>
            <person name="Quackenbush J."/>
            <person name="Wahlestedt C."/>
            <person name="Mattick J.S."/>
            <person name="Hume D.A."/>
            <person name="Kai C."/>
            <person name="Sasaki D."/>
            <person name="Tomaru Y."/>
            <person name="Fukuda S."/>
            <person name="Kanamori-Katayama M."/>
            <person name="Suzuki M."/>
            <person name="Aoki J."/>
            <person name="Arakawa T."/>
            <person name="Iida J."/>
            <person name="Imamura K."/>
            <person name="Itoh M."/>
            <person name="Kato T."/>
            <person name="Kawaji H."/>
            <person name="Kawagashira N."/>
            <person name="Kawashima T."/>
            <person name="Kojima M."/>
            <person name="Kondo S."/>
            <person name="Konno H."/>
            <person name="Nakano K."/>
            <person name="Ninomiya N."/>
            <person name="Nishio T."/>
            <person name="Okada M."/>
            <person name="Plessy C."/>
            <person name="Shibata K."/>
            <person name="Shiraki T."/>
            <person name="Suzuki S."/>
            <person name="Tagami M."/>
            <person name="Waki K."/>
            <person name="Watahiki A."/>
            <person name="Okamura-Oho Y."/>
            <person name="Suzuki H."/>
            <person name="Kawai J."/>
            <person name="Hayashizaki Y."/>
        </authorList>
    </citation>
    <scope>NUCLEOTIDE SEQUENCE [LARGE SCALE MRNA] (ISOFORMS 1 AND 2)</scope>
    <source>
        <strain>C57BL/6J</strain>
        <strain>NOD</strain>
        <tissue>Medulla oblongata</tissue>
        <tissue>Spleen</tissue>
    </source>
</reference>
<reference key="3">
    <citation type="journal article" date="2004" name="Genome Res.">
        <title>The status, quality, and expansion of the NIH full-length cDNA project: the Mammalian Gene Collection (MGC).</title>
        <authorList>
            <consortium name="The MGC Project Team"/>
        </authorList>
    </citation>
    <scope>NUCLEOTIDE SEQUENCE [LARGE SCALE MRNA] (ISOFORM 2)</scope>
</reference>
<reference key="4">
    <citation type="journal article" date="2010" name="Cell">
        <title>A tissue-specific atlas of mouse protein phosphorylation and expression.</title>
        <authorList>
            <person name="Huttlin E.L."/>
            <person name="Jedrychowski M.P."/>
            <person name="Elias J.E."/>
            <person name="Goswami T."/>
            <person name="Rad R."/>
            <person name="Beausoleil S.A."/>
            <person name="Villen J."/>
            <person name="Haas W."/>
            <person name="Sowa M.E."/>
            <person name="Gygi S.P."/>
        </authorList>
    </citation>
    <scope>IDENTIFICATION BY MASS SPECTROMETRY [LARGE SCALE ANALYSIS]</scope>
    <source>
        <tissue>Brain</tissue>
    </source>
</reference>
<proteinExistence type="evidence at protein level"/>
<accession>Q9JHR9</accession>
<accession>Q14BZ2</accession>
<accession>Q3U0V7</accession>
<accession>Q3UYH0</accession>
<gene>
    <name type="primary">Nrip2</name>
    <name type="synonym">Nix1</name>
</gene>
<name>NRIP2_MOUSE</name>
<comment type="function">
    <text evidence="2">Down-regulates transcriptional activation by nuclear receptors, such as NR1F2.</text>
</comment>
<comment type="subunit">
    <text evidence="2">Interacts with NR1F2, RARA and THRB in a ligand-dependent manner.</text>
</comment>
<comment type="subcellular location">
    <subcellularLocation>
        <location evidence="2">Nucleus</location>
    </subcellularLocation>
</comment>
<comment type="alternative products">
    <event type="alternative splicing"/>
    <isoform>
        <id>Q9JHR9-1</id>
        <name>1</name>
        <sequence type="displayed"/>
    </isoform>
    <isoform>
        <id>Q9JHR9-2</id>
        <name>2</name>
        <sequence type="described" ref="VSP_022275"/>
    </isoform>
</comment>
<comment type="tissue specificity">
    <text evidence="2">Expression is restricted to the central nervous system (neurons in the dentate gyrus of the hippocampus, the amygdala, thalamic and hypothalamic regions).</text>
</comment>
<comment type="sequence caution" evidence="6">
    <conflict type="frameshift">
        <sequence resource="EMBL-CDS" id="BAE22242"/>
    </conflict>
</comment>
<feature type="chain" id="PRO_0000271057" description="Nuclear receptor-interacting protein 2">
    <location>
        <begin position="1"/>
        <end position="270"/>
    </location>
</feature>
<feature type="region of interest" description="Disordered" evidence="1">
    <location>
        <begin position="1"/>
        <end position="33"/>
    </location>
</feature>
<feature type="region of interest" description="Interaction with NR1F2" evidence="2">
    <location>
        <begin position="61"/>
        <end position="99"/>
    </location>
</feature>
<feature type="short sequence motif" description="LXXLL motif">
    <location>
        <begin position="192"/>
        <end position="196"/>
    </location>
</feature>
<feature type="compositionally biased region" description="Basic and acidic residues" evidence="1">
    <location>
        <begin position="1"/>
        <end position="27"/>
    </location>
</feature>
<feature type="splice variant" id="VSP_022275" description="In isoform 2." evidence="3 4 5">
    <original>LATSLSASSLLPSALGIPTESICDSEALVPHSLLSLPKCTTKSLTEKDLQQMGSRLHPGCRGQSYLLPPLA</original>
    <variation>CCIDLDRGVLRLKAPFSELPFLPLYQEPGQ</variation>
    <location>
        <begin position="200"/>
        <end position="270"/>
    </location>
</feature>
<feature type="sequence conflict" description="In Ref. 2; BAE22242." evidence="6" ref="2">
    <original>R</original>
    <variation>L</variation>
    <location>
        <position position="32"/>
    </location>
</feature>
<feature type="sequence conflict" description="In Ref. 2; BAE33744." evidence="6" ref="2">
    <original>Q</original>
    <variation>R</variation>
    <location>
        <position position="33"/>
    </location>
</feature>
<feature type="sequence conflict" description="In Ref. 1; CAB95737." evidence="6" ref="1">
    <original>L</original>
    <variation>P</variation>
    <location>
        <position position="48"/>
    </location>
</feature>
<feature type="sequence conflict" description="In Ref. 2; BAE22242." evidence="6" ref="2">
    <original>P</original>
    <variation>T</variation>
    <location>
        <position position="147"/>
    </location>
</feature>
<feature type="sequence conflict" description="In Ref. 2; BAE33744." evidence="6" ref="2">
    <original>P</original>
    <variation>S</variation>
    <location>
        <position position="158"/>
    </location>
</feature>
<feature type="sequence conflict" description="In Ref. 2; BAE22242." evidence="6" ref="2">
    <original>E</original>
    <variation>Q</variation>
    <location>
        <position position="163"/>
    </location>
</feature>
<protein>
    <recommendedName>
        <fullName>Nuclear receptor-interacting protein 2</fullName>
    </recommendedName>
    <alternativeName>
        <fullName>Neuronal-interacting factor X 1</fullName>
    </alternativeName>
</protein>